<reference key="1">
    <citation type="journal article" date="2005" name="Nat. Genet.">
        <title>The complete genome sequence of Francisella tularensis, the causative agent of tularemia.</title>
        <authorList>
            <person name="Larsson P."/>
            <person name="Oyston P.C.F."/>
            <person name="Chain P."/>
            <person name="Chu M.C."/>
            <person name="Duffield M."/>
            <person name="Fuxelius H.-H."/>
            <person name="Garcia E."/>
            <person name="Haelltorp G."/>
            <person name="Johansson D."/>
            <person name="Isherwood K.E."/>
            <person name="Karp P.D."/>
            <person name="Larsson E."/>
            <person name="Liu Y."/>
            <person name="Michell S."/>
            <person name="Prior J."/>
            <person name="Prior R."/>
            <person name="Malfatti S."/>
            <person name="Sjoestedt A."/>
            <person name="Svensson K."/>
            <person name="Thompson N."/>
            <person name="Vergez L."/>
            <person name="Wagg J.K."/>
            <person name="Wren B.W."/>
            <person name="Lindler L.E."/>
            <person name="Andersson S.G.E."/>
            <person name="Forsman M."/>
            <person name="Titball R.W."/>
        </authorList>
    </citation>
    <scope>NUCLEOTIDE SEQUENCE [LARGE SCALE GENOMIC DNA]</scope>
    <source>
        <strain>SCHU S4 / Schu 4</strain>
    </source>
</reference>
<sequence>MKNEKIVVLYGGDSPEREVSLKSGKAVLDSLISQGYDAVGVDASGKELVAKLLELKPDKCFVALHGEDGENGRVSALLEMLEIKHTSSSMKSSVITMDKMISKEILMHHRMPTPMAKFLTDKLVAEDEISFPVAVKPSSGGSSIATFKVKSIQELKHAYEEASKYGEVMIEQWVTGKEITVAIVNDEVYSSVWIEPQNEFYDYESKYSGKSIYHSPSGLCEQKELEVRQLAKKAYDLLGCSGHARVDFIYDDRGNFYIMEINSSPGMTDNSLSPKSAAAEGVDFDSFVKRIIEQAQ</sequence>
<name>DDL_FRATT</name>
<accession>Q5NI96</accession>
<gene>
    <name evidence="2" type="primary">ddl</name>
    <name type="ordered locus">FTT_0185</name>
</gene>
<dbReference type="EC" id="6.3.2.4" evidence="2"/>
<dbReference type="EMBL" id="AJ749949">
    <property type="protein sequence ID" value="CAG44818.1"/>
    <property type="molecule type" value="Genomic_DNA"/>
</dbReference>
<dbReference type="RefSeq" id="WP_003027426.1">
    <property type="nucleotide sequence ID" value="NZ_CP010290.1"/>
</dbReference>
<dbReference type="RefSeq" id="YP_169246.1">
    <property type="nucleotide sequence ID" value="NC_006570.2"/>
</dbReference>
<dbReference type="SMR" id="Q5NI96"/>
<dbReference type="IntAct" id="Q5NI96">
    <property type="interactions" value="3"/>
</dbReference>
<dbReference type="STRING" id="177416.FTT_0185"/>
<dbReference type="DNASU" id="3191505"/>
<dbReference type="EnsemblBacteria" id="CAG44818">
    <property type="protein sequence ID" value="CAG44818"/>
    <property type="gene ID" value="FTT_0185"/>
</dbReference>
<dbReference type="KEGG" id="ftu:FTT_0185"/>
<dbReference type="eggNOG" id="COG1181">
    <property type="taxonomic scope" value="Bacteria"/>
</dbReference>
<dbReference type="OrthoDB" id="9813261at2"/>
<dbReference type="UniPathway" id="UPA00219"/>
<dbReference type="Proteomes" id="UP000001174">
    <property type="component" value="Chromosome"/>
</dbReference>
<dbReference type="GO" id="GO:0005737">
    <property type="term" value="C:cytoplasm"/>
    <property type="evidence" value="ECO:0007669"/>
    <property type="project" value="UniProtKB-SubCell"/>
</dbReference>
<dbReference type="GO" id="GO:0005524">
    <property type="term" value="F:ATP binding"/>
    <property type="evidence" value="ECO:0007669"/>
    <property type="project" value="UniProtKB-KW"/>
</dbReference>
<dbReference type="GO" id="GO:0008716">
    <property type="term" value="F:D-alanine-D-alanine ligase activity"/>
    <property type="evidence" value="ECO:0007669"/>
    <property type="project" value="UniProtKB-UniRule"/>
</dbReference>
<dbReference type="GO" id="GO:0046872">
    <property type="term" value="F:metal ion binding"/>
    <property type="evidence" value="ECO:0007669"/>
    <property type="project" value="UniProtKB-KW"/>
</dbReference>
<dbReference type="GO" id="GO:0071555">
    <property type="term" value="P:cell wall organization"/>
    <property type="evidence" value="ECO:0007669"/>
    <property type="project" value="UniProtKB-KW"/>
</dbReference>
<dbReference type="GO" id="GO:0009252">
    <property type="term" value="P:peptidoglycan biosynthetic process"/>
    <property type="evidence" value="ECO:0007669"/>
    <property type="project" value="UniProtKB-UniRule"/>
</dbReference>
<dbReference type="GO" id="GO:0008360">
    <property type="term" value="P:regulation of cell shape"/>
    <property type="evidence" value="ECO:0007669"/>
    <property type="project" value="UniProtKB-KW"/>
</dbReference>
<dbReference type="Gene3D" id="3.40.50.20">
    <property type="match status" value="1"/>
</dbReference>
<dbReference type="Gene3D" id="3.30.1490.20">
    <property type="entry name" value="ATP-grasp fold, A domain"/>
    <property type="match status" value="1"/>
</dbReference>
<dbReference type="Gene3D" id="3.30.470.20">
    <property type="entry name" value="ATP-grasp fold, B domain"/>
    <property type="match status" value="1"/>
</dbReference>
<dbReference type="HAMAP" id="MF_00047">
    <property type="entry name" value="Dala_Dala_lig"/>
    <property type="match status" value="1"/>
</dbReference>
<dbReference type="InterPro" id="IPR011761">
    <property type="entry name" value="ATP-grasp"/>
</dbReference>
<dbReference type="InterPro" id="IPR013815">
    <property type="entry name" value="ATP_grasp_subdomain_1"/>
</dbReference>
<dbReference type="InterPro" id="IPR000291">
    <property type="entry name" value="D-Ala_lig_Van_CS"/>
</dbReference>
<dbReference type="InterPro" id="IPR005905">
    <property type="entry name" value="D_ala_D_ala"/>
</dbReference>
<dbReference type="InterPro" id="IPR011095">
    <property type="entry name" value="Dala_Dala_lig_C"/>
</dbReference>
<dbReference type="InterPro" id="IPR016185">
    <property type="entry name" value="PreATP-grasp_dom_sf"/>
</dbReference>
<dbReference type="NCBIfam" id="TIGR01205">
    <property type="entry name" value="D_ala_D_alaTIGR"/>
    <property type="match status" value="1"/>
</dbReference>
<dbReference type="NCBIfam" id="NF002378">
    <property type="entry name" value="PRK01372.1"/>
    <property type="match status" value="1"/>
</dbReference>
<dbReference type="NCBIfam" id="NF011167">
    <property type="entry name" value="PRK14569.1"/>
    <property type="match status" value="1"/>
</dbReference>
<dbReference type="PANTHER" id="PTHR23132">
    <property type="entry name" value="D-ALANINE--D-ALANINE LIGASE"/>
    <property type="match status" value="1"/>
</dbReference>
<dbReference type="PANTHER" id="PTHR23132:SF23">
    <property type="entry name" value="D-ALANINE--D-ALANINE LIGASE B"/>
    <property type="match status" value="1"/>
</dbReference>
<dbReference type="Pfam" id="PF07478">
    <property type="entry name" value="Dala_Dala_lig_C"/>
    <property type="match status" value="1"/>
</dbReference>
<dbReference type="PIRSF" id="PIRSF039102">
    <property type="entry name" value="Ddl/VanB"/>
    <property type="match status" value="1"/>
</dbReference>
<dbReference type="SUPFAM" id="SSF56059">
    <property type="entry name" value="Glutathione synthetase ATP-binding domain-like"/>
    <property type="match status" value="1"/>
</dbReference>
<dbReference type="SUPFAM" id="SSF52440">
    <property type="entry name" value="PreATP-grasp domain"/>
    <property type="match status" value="1"/>
</dbReference>
<dbReference type="PROSITE" id="PS50975">
    <property type="entry name" value="ATP_GRASP"/>
    <property type="match status" value="1"/>
</dbReference>
<dbReference type="PROSITE" id="PS00843">
    <property type="entry name" value="DALA_DALA_LIGASE_1"/>
    <property type="match status" value="1"/>
</dbReference>
<dbReference type="PROSITE" id="PS00844">
    <property type="entry name" value="DALA_DALA_LIGASE_2"/>
    <property type="match status" value="1"/>
</dbReference>
<feature type="chain" id="PRO_0000341098" description="D-alanine--D-alanine ligase">
    <location>
        <begin position="1"/>
        <end position="296"/>
    </location>
</feature>
<feature type="domain" description="ATP-grasp" evidence="2">
    <location>
        <begin position="103"/>
        <end position="293"/>
    </location>
</feature>
<feature type="binding site" evidence="2">
    <location>
        <begin position="129"/>
        <end position="180"/>
    </location>
    <ligand>
        <name>ATP</name>
        <dbReference type="ChEBI" id="CHEBI:30616"/>
    </ligand>
</feature>
<feature type="binding site" evidence="2">
    <location>
        <position position="247"/>
    </location>
    <ligand>
        <name>Mg(2+)</name>
        <dbReference type="ChEBI" id="CHEBI:18420"/>
        <label>1</label>
    </ligand>
</feature>
<feature type="binding site" evidence="2">
    <location>
        <position position="260"/>
    </location>
    <ligand>
        <name>Mg(2+)</name>
        <dbReference type="ChEBI" id="CHEBI:18420"/>
        <label>1</label>
    </ligand>
</feature>
<feature type="binding site" evidence="2">
    <location>
        <position position="260"/>
    </location>
    <ligand>
        <name>Mg(2+)</name>
        <dbReference type="ChEBI" id="CHEBI:18420"/>
        <label>2</label>
    </ligand>
</feature>
<feature type="binding site" evidence="2">
    <location>
        <position position="262"/>
    </location>
    <ligand>
        <name>Mg(2+)</name>
        <dbReference type="ChEBI" id="CHEBI:18420"/>
        <label>2</label>
    </ligand>
</feature>
<organism>
    <name type="scientific">Francisella tularensis subsp. tularensis (strain SCHU S4 / Schu 4)</name>
    <dbReference type="NCBI Taxonomy" id="177416"/>
    <lineage>
        <taxon>Bacteria</taxon>
        <taxon>Pseudomonadati</taxon>
        <taxon>Pseudomonadota</taxon>
        <taxon>Gammaproteobacteria</taxon>
        <taxon>Thiotrichales</taxon>
        <taxon>Francisellaceae</taxon>
        <taxon>Francisella</taxon>
    </lineage>
</organism>
<proteinExistence type="inferred from homology"/>
<comment type="function">
    <text evidence="2">Cell wall formation.</text>
</comment>
<comment type="catalytic activity">
    <reaction evidence="2">
        <text>2 D-alanine + ATP = D-alanyl-D-alanine + ADP + phosphate + H(+)</text>
        <dbReference type="Rhea" id="RHEA:11224"/>
        <dbReference type="ChEBI" id="CHEBI:15378"/>
        <dbReference type="ChEBI" id="CHEBI:30616"/>
        <dbReference type="ChEBI" id="CHEBI:43474"/>
        <dbReference type="ChEBI" id="CHEBI:57416"/>
        <dbReference type="ChEBI" id="CHEBI:57822"/>
        <dbReference type="ChEBI" id="CHEBI:456216"/>
        <dbReference type="EC" id="6.3.2.4"/>
    </reaction>
</comment>
<comment type="cofactor">
    <cofactor evidence="1">
        <name>Mg(2+)</name>
        <dbReference type="ChEBI" id="CHEBI:18420"/>
    </cofactor>
    <cofactor evidence="1">
        <name>Mn(2+)</name>
        <dbReference type="ChEBI" id="CHEBI:29035"/>
    </cofactor>
    <text evidence="1">Binds 2 magnesium or manganese ions per subunit.</text>
</comment>
<comment type="pathway">
    <text evidence="2">Cell wall biogenesis; peptidoglycan biosynthesis.</text>
</comment>
<comment type="subcellular location">
    <subcellularLocation>
        <location evidence="2">Cytoplasm</location>
    </subcellularLocation>
</comment>
<comment type="similarity">
    <text evidence="2">Belongs to the D-alanine--D-alanine ligase family.</text>
</comment>
<keyword id="KW-0067">ATP-binding</keyword>
<keyword id="KW-0133">Cell shape</keyword>
<keyword id="KW-0961">Cell wall biogenesis/degradation</keyword>
<keyword id="KW-0963">Cytoplasm</keyword>
<keyword id="KW-0436">Ligase</keyword>
<keyword id="KW-0460">Magnesium</keyword>
<keyword id="KW-0464">Manganese</keyword>
<keyword id="KW-0479">Metal-binding</keyword>
<keyword id="KW-0547">Nucleotide-binding</keyword>
<keyword id="KW-0573">Peptidoglycan synthesis</keyword>
<keyword id="KW-1185">Reference proteome</keyword>
<evidence type="ECO:0000250" key="1"/>
<evidence type="ECO:0000255" key="2">
    <source>
        <dbReference type="HAMAP-Rule" id="MF_00047"/>
    </source>
</evidence>
<protein>
    <recommendedName>
        <fullName evidence="2">D-alanine--D-alanine ligase</fullName>
        <ecNumber evidence="2">6.3.2.4</ecNumber>
    </recommendedName>
    <alternativeName>
        <fullName evidence="2">D-Ala-D-Ala ligase</fullName>
    </alternativeName>
    <alternativeName>
        <fullName evidence="2">D-alanylalanine synthetase</fullName>
    </alternativeName>
</protein>